<reference key="1">
    <citation type="journal article" date="2008" name="J. Bacteriol.">
        <title>The pangenome structure of Escherichia coli: comparative genomic analysis of E. coli commensal and pathogenic isolates.</title>
        <authorList>
            <person name="Rasko D.A."/>
            <person name="Rosovitz M.J."/>
            <person name="Myers G.S.A."/>
            <person name="Mongodin E.F."/>
            <person name="Fricke W.F."/>
            <person name="Gajer P."/>
            <person name="Crabtree J."/>
            <person name="Sebaihia M."/>
            <person name="Thomson N.R."/>
            <person name="Chaudhuri R."/>
            <person name="Henderson I.R."/>
            <person name="Sperandio V."/>
            <person name="Ravel J."/>
        </authorList>
    </citation>
    <scope>NUCLEOTIDE SEQUENCE [LARGE SCALE GENOMIC DNA]</scope>
    <source>
        <strain>E24377A / ETEC</strain>
    </source>
</reference>
<comment type="function">
    <text evidence="1">Responsible for synthesis of pseudouridine from uracil-55 in the psi GC loop of transfer RNAs.</text>
</comment>
<comment type="catalytic activity">
    <reaction evidence="1">
        <text>uridine(55) in tRNA = pseudouridine(55) in tRNA</text>
        <dbReference type="Rhea" id="RHEA:42532"/>
        <dbReference type="Rhea" id="RHEA-COMP:10101"/>
        <dbReference type="Rhea" id="RHEA-COMP:10102"/>
        <dbReference type="ChEBI" id="CHEBI:65314"/>
        <dbReference type="ChEBI" id="CHEBI:65315"/>
        <dbReference type="EC" id="5.4.99.25"/>
    </reaction>
</comment>
<comment type="similarity">
    <text evidence="1">Belongs to the pseudouridine synthase TruB family. Type 1 subfamily.</text>
</comment>
<keyword id="KW-0413">Isomerase</keyword>
<keyword id="KW-1185">Reference proteome</keyword>
<keyword id="KW-0819">tRNA processing</keyword>
<gene>
    <name evidence="1" type="primary">truB</name>
    <name type="ordered locus">EcE24377A_3650</name>
</gene>
<evidence type="ECO:0000255" key="1">
    <source>
        <dbReference type="HAMAP-Rule" id="MF_01080"/>
    </source>
</evidence>
<proteinExistence type="inferred from homology"/>
<name>TRUB_ECO24</name>
<feature type="chain" id="PRO_1000084583" description="tRNA pseudouridine synthase B">
    <location>
        <begin position="1"/>
        <end position="314"/>
    </location>
</feature>
<feature type="active site" description="Nucleophile" evidence="1">
    <location>
        <position position="48"/>
    </location>
</feature>
<feature type="binding site" evidence="1">
    <location>
        <position position="43"/>
    </location>
    <ligand>
        <name>substrate</name>
    </ligand>
</feature>
<feature type="binding site" evidence="1">
    <location>
        <position position="76"/>
    </location>
    <ligand>
        <name>substrate</name>
    </ligand>
</feature>
<feature type="binding site" evidence="1">
    <location>
        <position position="179"/>
    </location>
    <ligand>
        <name>substrate</name>
    </ligand>
</feature>
<feature type="binding site" evidence="1">
    <location>
        <position position="200"/>
    </location>
    <ligand>
        <name>substrate</name>
    </ligand>
</feature>
<dbReference type="EC" id="5.4.99.25" evidence="1"/>
<dbReference type="EMBL" id="CP000800">
    <property type="protein sequence ID" value="ABV17213.1"/>
    <property type="molecule type" value="Genomic_DNA"/>
</dbReference>
<dbReference type="RefSeq" id="WP_000089719.1">
    <property type="nucleotide sequence ID" value="NC_009801.1"/>
</dbReference>
<dbReference type="SMR" id="A7ZS63"/>
<dbReference type="GeneID" id="75206022"/>
<dbReference type="KEGG" id="ecw:EcE24377A_3650"/>
<dbReference type="HOGENOM" id="CLU_032087_0_3_6"/>
<dbReference type="Proteomes" id="UP000001122">
    <property type="component" value="Chromosome"/>
</dbReference>
<dbReference type="GO" id="GO:0003723">
    <property type="term" value="F:RNA binding"/>
    <property type="evidence" value="ECO:0007669"/>
    <property type="project" value="InterPro"/>
</dbReference>
<dbReference type="GO" id="GO:0160148">
    <property type="term" value="F:tRNA pseudouridine(55) synthase activity"/>
    <property type="evidence" value="ECO:0007669"/>
    <property type="project" value="UniProtKB-EC"/>
</dbReference>
<dbReference type="GO" id="GO:1990481">
    <property type="term" value="P:mRNA pseudouridine synthesis"/>
    <property type="evidence" value="ECO:0007669"/>
    <property type="project" value="TreeGrafter"/>
</dbReference>
<dbReference type="GO" id="GO:0031119">
    <property type="term" value="P:tRNA pseudouridine synthesis"/>
    <property type="evidence" value="ECO:0007669"/>
    <property type="project" value="UniProtKB-UniRule"/>
</dbReference>
<dbReference type="CDD" id="cd02573">
    <property type="entry name" value="PseudoU_synth_EcTruB"/>
    <property type="match status" value="1"/>
</dbReference>
<dbReference type="CDD" id="cd21152">
    <property type="entry name" value="PUA_TruB_bacterial"/>
    <property type="match status" value="1"/>
</dbReference>
<dbReference type="FunFam" id="2.30.130.10:FF:000004">
    <property type="entry name" value="tRNA pseudouridine synthase B"/>
    <property type="match status" value="1"/>
</dbReference>
<dbReference type="FunFam" id="3.30.2350.10:FF:000003">
    <property type="entry name" value="tRNA pseudouridine synthase B"/>
    <property type="match status" value="1"/>
</dbReference>
<dbReference type="Gene3D" id="3.30.2350.10">
    <property type="entry name" value="Pseudouridine synthase"/>
    <property type="match status" value="1"/>
</dbReference>
<dbReference type="Gene3D" id="2.30.130.10">
    <property type="entry name" value="PUA domain"/>
    <property type="match status" value="1"/>
</dbReference>
<dbReference type="HAMAP" id="MF_01080">
    <property type="entry name" value="TruB_bact"/>
    <property type="match status" value="1"/>
</dbReference>
<dbReference type="InterPro" id="IPR020103">
    <property type="entry name" value="PsdUridine_synth_cat_dom_sf"/>
</dbReference>
<dbReference type="InterPro" id="IPR002501">
    <property type="entry name" value="PsdUridine_synth_N"/>
</dbReference>
<dbReference type="InterPro" id="IPR015947">
    <property type="entry name" value="PUA-like_sf"/>
</dbReference>
<dbReference type="InterPro" id="IPR036974">
    <property type="entry name" value="PUA_sf"/>
</dbReference>
<dbReference type="InterPro" id="IPR014780">
    <property type="entry name" value="tRNA_psdUridine_synth_TruB"/>
</dbReference>
<dbReference type="InterPro" id="IPR015240">
    <property type="entry name" value="tRNA_sdUridine_synth_fam1_C"/>
</dbReference>
<dbReference type="InterPro" id="IPR032819">
    <property type="entry name" value="TruB_C"/>
</dbReference>
<dbReference type="NCBIfam" id="TIGR00431">
    <property type="entry name" value="TruB"/>
    <property type="match status" value="1"/>
</dbReference>
<dbReference type="PANTHER" id="PTHR13767:SF2">
    <property type="entry name" value="PSEUDOURIDYLATE SYNTHASE TRUB1"/>
    <property type="match status" value="1"/>
</dbReference>
<dbReference type="PANTHER" id="PTHR13767">
    <property type="entry name" value="TRNA-PSEUDOURIDINE SYNTHASE"/>
    <property type="match status" value="1"/>
</dbReference>
<dbReference type="Pfam" id="PF09157">
    <property type="entry name" value="TruB-C_2"/>
    <property type="match status" value="1"/>
</dbReference>
<dbReference type="Pfam" id="PF16198">
    <property type="entry name" value="TruB_C_2"/>
    <property type="match status" value="1"/>
</dbReference>
<dbReference type="Pfam" id="PF01509">
    <property type="entry name" value="TruB_N"/>
    <property type="match status" value="1"/>
</dbReference>
<dbReference type="SUPFAM" id="SSF55120">
    <property type="entry name" value="Pseudouridine synthase"/>
    <property type="match status" value="1"/>
</dbReference>
<dbReference type="SUPFAM" id="SSF88697">
    <property type="entry name" value="PUA domain-like"/>
    <property type="match status" value="1"/>
</dbReference>
<protein>
    <recommendedName>
        <fullName evidence="1">tRNA pseudouridine synthase B</fullName>
        <ecNumber evidence="1">5.4.99.25</ecNumber>
    </recommendedName>
    <alternativeName>
        <fullName evidence="1">tRNA pseudouridine(55) synthase</fullName>
        <shortName evidence="1">Psi55 synthase</shortName>
    </alternativeName>
    <alternativeName>
        <fullName evidence="1">tRNA pseudouridylate synthase</fullName>
    </alternativeName>
    <alternativeName>
        <fullName evidence="1">tRNA-uridine isomerase</fullName>
    </alternativeName>
</protein>
<organism>
    <name type="scientific">Escherichia coli O139:H28 (strain E24377A / ETEC)</name>
    <dbReference type="NCBI Taxonomy" id="331111"/>
    <lineage>
        <taxon>Bacteria</taxon>
        <taxon>Pseudomonadati</taxon>
        <taxon>Pseudomonadota</taxon>
        <taxon>Gammaproteobacteria</taxon>
        <taxon>Enterobacterales</taxon>
        <taxon>Enterobacteriaceae</taxon>
        <taxon>Escherichia</taxon>
    </lineage>
</organism>
<accession>A7ZS63</accession>
<sequence length="314" mass="35077">MSRPRRRGRDINGVLLLDKSQGMSSNDALQKVKRIYNANRAGHTGALDPLATGMLPICLGEATKFSQYLLDSDKRYRVIARLGQRTDTSDADGQIVEERPVTFSAEQLAAALDTFRGDIEQIPSMYSALKYQGKKLYEYARQGIEVPREARPITVYELLFIRHEGNELELEIHCSKGTYIRTIIDDLGEKLGCGAHVIYLRRLAVSKYPVERMVTLEHLRELVEQAEQQDIPAAELLDPLLMPMDSPASDYPVVNLPLTSSVYFKNGNPVRTSGAPLEGLVRVTEGENGKFIGMGEIDDEGRVAPRRLVVEYPA</sequence>